<organism>
    <name type="scientific">Homo sapiens</name>
    <name type="common">Human</name>
    <dbReference type="NCBI Taxonomy" id="9606"/>
    <lineage>
        <taxon>Eukaryota</taxon>
        <taxon>Metazoa</taxon>
        <taxon>Chordata</taxon>
        <taxon>Craniata</taxon>
        <taxon>Vertebrata</taxon>
        <taxon>Euteleostomi</taxon>
        <taxon>Mammalia</taxon>
        <taxon>Eutheria</taxon>
        <taxon>Euarchontoglires</taxon>
        <taxon>Primates</taxon>
        <taxon>Haplorrhini</taxon>
        <taxon>Catarrhini</taxon>
        <taxon>Hominidae</taxon>
        <taxon>Homo</taxon>
    </lineage>
</organism>
<keyword id="KW-0025">Alternative splicing</keyword>
<keyword id="KW-0225">Disease variant</keyword>
<keyword id="KW-0238">DNA-binding</keyword>
<keyword id="KW-0242">Dwarfism</keyword>
<keyword id="KW-0991">Intellectual disability</keyword>
<keyword id="KW-0479">Metal-binding</keyword>
<keyword id="KW-0539">Nucleus</keyword>
<keyword id="KW-0597">Phosphoprotein</keyword>
<keyword id="KW-1267">Proteomics identification</keyword>
<keyword id="KW-1185">Reference proteome</keyword>
<keyword id="KW-0677">Repeat</keyword>
<keyword id="KW-0804">Transcription</keyword>
<keyword id="KW-0805">Transcription regulation</keyword>
<keyword id="KW-0862">Zinc</keyword>
<keyword id="KW-0863">Zinc-finger</keyword>
<feature type="chain" id="PRO_0000047568" description="Zinc finger protein 407">
    <location>
        <begin position="1"/>
        <end position="2248"/>
    </location>
</feature>
<feature type="zinc finger region" description="C2H2-type 1" evidence="1">
    <location>
        <begin position="186"/>
        <end position="208"/>
    </location>
</feature>
<feature type="zinc finger region" description="C2H2-type 2" evidence="1">
    <location>
        <begin position="215"/>
        <end position="238"/>
    </location>
</feature>
<feature type="zinc finger region" description="C2H2-type 3" evidence="1">
    <location>
        <begin position="244"/>
        <end position="268"/>
    </location>
</feature>
<feature type="zinc finger region" description="C2H2-type 4" evidence="1">
    <location>
        <begin position="528"/>
        <end position="551"/>
    </location>
</feature>
<feature type="zinc finger region" description="C2H2-type 5" evidence="1">
    <location>
        <begin position="557"/>
        <end position="581"/>
    </location>
</feature>
<feature type="zinc finger region" description="C2H2-type 6" evidence="1">
    <location>
        <begin position="615"/>
        <end position="639"/>
    </location>
</feature>
<feature type="zinc finger region" description="C2H2-type 7" evidence="1">
    <location>
        <begin position="705"/>
        <end position="728"/>
    </location>
</feature>
<feature type="zinc finger region" description="C2H2-type 8" evidence="1">
    <location>
        <begin position="850"/>
        <end position="873"/>
    </location>
</feature>
<feature type="zinc finger region" description="C2H2-type 9" evidence="1">
    <location>
        <begin position="879"/>
        <end position="903"/>
    </location>
</feature>
<feature type="zinc finger region" description="C2H2-type 10" evidence="1">
    <location>
        <begin position="1017"/>
        <end position="1040"/>
    </location>
</feature>
<feature type="zinc finger region" description="C2H2-type 11" evidence="1">
    <location>
        <begin position="1046"/>
        <end position="1070"/>
    </location>
</feature>
<feature type="zinc finger region" description="C2H2-type 12" evidence="1">
    <location>
        <begin position="1444"/>
        <end position="1468"/>
    </location>
</feature>
<feature type="zinc finger region" description="C2H2-type 13" evidence="1">
    <location>
        <begin position="1486"/>
        <end position="1509"/>
    </location>
</feature>
<feature type="zinc finger region" description="C2H2-type 14; degenerate" evidence="1">
    <location>
        <begin position="1537"/>
        <end position="1561"/>
    </location>
</feature>
<feature type="zinc finger region" description="C2H2-type 15" evidence="1">
    <location>
        <begin position="1567"/>
        <end position="1589"/>
    </location>
</feature>
<feature type="zinc finger region" description="C2H2-type 16" evidence="1">
    <location>
        <begin position="1595"/>
        <end position="1618"/>
    </location>
</feature>
<feature type="zinc finger region" description="C2H2-type 17" evidence="1">
    <location>
        <begin position="1628"/>
        <end position="1650"/>
    </location>
</feature>
<feature type="zinc finger region" description="C2H2-type 18" evidence="1">
    <location>
        <begin position="1656"/>
        <end position="1680"/>
    </location>
</feature>
<feature type="zinc finger region" description="C2H2-type 19" evidence="1">
    <location>
        <begin position="1686"/>
        <end position="1708"/>
    </location>
</feature>
<feature type="zinc finger region" description="C2H2-type 20" evidence="1">
    <location>
        <begin position="1714"/>
        <end position="1736"/>
    </location>
</feature>
<feature type="zinc finger region" description="C2H2-type 21" evidence="1">
    <location>
        <begin position="1742"/>
        <end position="1767"/>
    </location>
</feature>
<feature type="zinc finger region" description="C2H2-type 22" evidence="1">
    <location>
        <begin position="1773"/>
        <end position="1796"/>
    </location>
</feature>
<feature type="region of interest" description="Disordered" evidence="2">
    <location>
        <begin position="1"/>
        <end position="84"/>
    </location>
</feature>
<feature type="region of interest" description="Disordered" evidence="2">
    <location>
        <begin position="291"/>
        <end position="322"/>
    </location>
</feature>
<feature type="region of interest" description="Disordered" evidence="2">
    <location>
        <begin position="494"/>
        <end position="515"/>
    </location>
</feature>
<feature type="region of interest" description="Disordered" evidence="2">
    <location>
        <begin position="667"/>
        <end position="700"/>
    </location>
</feature>
<feature type="region of interest" description="Disordered" evidence="2">
    <location>
        <begin position="821"/>
        <end position="847"/>
    </location>
</feature>
<feature type="region of interest" description="Disordered" evidence="2">
    <location>
        <begin position="910"/>
        <end position="962"/>
    </location>
</feature>
<feature type="compositionally biased region" description="Basic and acidic residues" evidence="2">
    <location>
        <begin position="1"/>
        <end position="32"/>
    </location>
</feature>
<feature type="compositionally biased region" description="Polar residues" evidence="2">
    <location>
        <begin position="494"/>
        <end position="504"/>
    </location>
</feature>
<feature type="compositionally biased region" description="Basic and acidic residues" evidence="2">
    <location>
        <begin position="669"/>
        <end position="699"/>
    </location>
</feature>
<feature type="modified residue" description="Phosphoserine" evidence="7 8">
    <location>
        <position position="1262"/>
    </location>
</feature>
<feature type="splice variant" id="VSP_028843" description="In isoform 3." evidence="5">
    <original>ERKFTCHLCDRSFTEKWALNNHMKLHTGEKPFKCTW</original>
    <variation>ERVKVAYRKIGTLPGIQNNRNASSASEAQSLCEHFS</variation>
    <location>
        <begin position="1625"/>
        <end position="1660"/>
    </location>
</feature>
<feature type="splice variant" id="VSP_028844" description="In isoform 3." evidence="5">
    <location>
        <begin position="1661"/>
        <end position="2248"/>
    </location>
</feature>
<feature type="splice variant" id="VSP_028845" description="In isoform 2." evidence="5">
    <original>IVSKS</original>
    <variation>KGQKL</variation>
    <location>
        <begin position="1811"/>
        <end position="1815"/>
    </location>
</feature>
<feature type="splice variant" id="VSP_028846" description="In isoform 2." evidence="5">
    <location>
        <begin position="1816"/>
        <end position="2248"/>
    </location>
</feature>
<feature type="sequence variant" id="VAR_052820" description="In dbSNP:rs3794942.">
    <original>N</original>
    <variation>S</variation>
    <location>
        <position position="69"/>
    </location>
</feature>
<feature type="sequence variant" id="VAR_052821" description="In dbSNP:rs7227263.">
    <original>G</original>
    <variation>R</variation>
    <location>
        <position position="512"/>
    </location>
</feature>
<feature type="sequence variant" id="VAR_086433" description="In SIMHA; uncertain significance; dbSNP:rs370360193." evidence="4">
    <original>G</original>
    <variation>V</variation>
    <location>
        <position position="802"/>
    </location>
</feature>
<feature type="sequence variant" id="VAR_086434" description="In SIMHA." evidence="4">
    <original>V</original>
    <variation>VV</variation>
    <location>
        <position position="939"/>
    </location>
</feature>
<feature type="sequence variant" id="VAR_086435" description="In SIMHA; uncertain significance; dbSNP:rs372318044." evidence="4">
    <original>R</original>
    <variation>G</variation>
    <location>
        <position position="962"/>
    </location>
</feature>
<feature type="sequence variant" id="VAR_036694" description="In dbSNP:rs948615.">
    <original>N</original>
    <variation>T</variation>
    <location>
        <position position="972"/>
    </location>
</feature>
<feature type="sequence variant" id="VAR_086436" description="In SIMHA; uncertain significance; dbSNP:rs1437942074." evidence="4">
    <original>K</original>
    <variation>N</variation>
    <location>
        <position position="1214"/>
    </location>
</feature>
<feature type="sequence variant" id="VAR_061945" description="In dbSNP:rs34048449.">
    <original>S</original>
    <variation>L</variation>
    <location>
        <position position="1259"/>
    </location>
</feature>
<feature type="sequence variant" id="VAR_086437" description="In SIMHA; dbSNP:rs571111328." evidence="3">
    <original>S</original>
    <variation>W</variation>
    <location>
        <position position="1685"/>
    </location>
</feature>
<feature type="sequence variant" id="VAR_052822" description="In dbSNP:rs17056248.">
    <original>A</original>
    <variation>T</variation>
    <location>
        <position position="1913"/>
    </location>
</feature>
<feature type="sequence conflict" description="In Ref. 2; BAA91077." evidence="6" ref="2">
    <original>K</original>
    <variation>E</variation>
    <location>
        <position position="988"/>
    </location>
</feature>
<feature type="sequence conflict" description="In Ref. 2; BAA91077." evidence="6" ref="2">
    <original>V</original>
    <variation>D</variation>
    <location>
        <position position="1297"/>
    </location>
</feature>
<feature type="sequence conflict" description="In Ref. 2; BAA91077." evidence="6" ref="2">
    <original>F</original>
    <variation>S</variation>
    <location>
        <position position="1353"/>
    </location>
</feature>
<feature type="sequence conflict" description="In Ref. 2; BAA91077." evidence="6" ref="2">
    <original>R</original>
    <variation>C</variation>
    <location>
        <position position="1415"/>
    </location>
</feature>
<feature type="sequence conflict" description="In Ref. 2; BAA91077." evidence="6" ref="2">
    <original>I</original>
    <variation>V</variation>
    <location>
        <position position="1520"/>
    </location>
</feature>
<feature type="sequence conflict" description="In Ref. 2; BAA91080." evidence="6" ref="2">
    <original>N</original>
    <variation>D</variation>
    <location>
        <position position="1584"/>
    </location>
</feature>
<feature type="sequence conflict" description="In Ref. 2; AK023901." evidence="6" ref="2">
    <original>D</original>
    <variation>G</variation>
    <location>
        <position position="2181"/>
    </location>
</feature>
<sequence>MMDSENKPENDEDEKINKEAQDLTKLSSHNEDGGPVSDVIASFPENSMGKRGFSESSNSDSVVIGEDRNKHASKRRKLDEAEPLKSGKQGICRLETSESSVTEGGIALDETGKETFLSDCTVGGTCLPNALSPSCNFSTIDVVSLKTDTEKTSAQEMVSLDLERESPFPPKEISVSCTIGNVDTVLKCSICGHLFSSCSDLEKHAESHMQQPKEHTCCHCSHKAESSSALHMHIKQAHGPQKVFSCDLCGFQCSEENLLNAHYLGKTHLRRQNLAARGGFVQILTKQPFPKKSRTMATKNVHSKPRTSKSIAKNSDSKGLRNVGSTFKDFRGSISKQSGSSSELLVEMMPSRNTLSQEVEIVEEHVTSLGLAQNPENQSRKLDTLVTSEGLLEKLESTKNTLQAAHGNSVTSRPRPERNILVLGNSFRRRSSTFTLKGQAKKRFNLLGIKRGTSETQRMYMKHLRTQMKTHDAESVLKHLEACSSVQRVCVTTSETQEAEQGQGSARPPDSGLHSLTVKPASGSQTLCACTDCGQVATNRTDLEIHVKRCHAREMKFYCRTCDFSSMSRRDLDEHLHSNQHQQTASVLSCQCCSFISLDEINLRDHMKEKHNMHFLCTPCNLFFLSEKDVEEHKATEKHINSLVQPKTLQSSNSDLVLQTLPLSTLESENAKESMDDSGKASQEEPLKSRVSHGNEVRHSSKPQFQCKKCFYKTRSSTVLTRHIKLRHGQDYHFLCKACNLYSLSKEGMEKHIKRSKHLENAKKNNIGLSFEECIERVCIGANDKKEEFDVSGNGRIEGHIGVQLQEHSYLEKGMLASEELSQSGGSTKDDELASTTTPKRGRPKGNISRTCSHCGLLASSITNLTVHIRRKHSHQYSYLCKVCKYYTVTKGDMERHCATKKHKGRVEIEASGKHSSDIIVGPEGGSLEAGKKNAGSAVTMSDEHANKPAESPTSVLEKPDRGNSIEAEVENVFHSLDGEVNSHLLDKKEQISSEPEDFAQPGDVYSQRDVTGTGENKCLHCEFSAHSSASLELHVKRKHTKEFEFYCMACDYYAVTRREMTRHAATEKHKMKRQSYLNSANVEAGSADMSKNIIMPEEEHQQNSEEFQIISGQPSDTLKSRNAADCSILNENTNLDMSKVLCAADSVEVETEEESNFNEDHSFCETFQQAPVKDKVRKPEEMMSLTMSSNYGSPSRFQNENSGSSALNCETAKKNHEISNDAGELRVHCEGEGGNAGDGGGVVPHRHLCPVTLDGERSAESPVLVVTRITREQGNLESGGQNRVARGHGLEDLKGVQEDPVLGNKEILMNSQHETEFILEEDGPASDSTVESSDVYETIISIDDKGQAMYSFGRFDSSIIRIKNPEDGELIDQSEEGLIATGVRISELPLKDCAQGVKKKKSEGSSIGESTRIRCDDCGFLADGLSGLNVHIAMKHPTKEKHFHCLLCGKSFYTESNLHQHLASAGHMRNEQASVEELPEGGATFKCVKCTEPFDSEQNLFLHIKGQHEELLREVNKYIVEDTEQINREREENQGNVCKYCGKMCRSSNSMAFLAHIRTHTGSKPFKCKICHFATAQLGDARNHVKRHLGMREYKCHVCGVAFVMKKHLNTHLLGKHGVGTPKERKFTCHLCDRSFTEKWALNNHMKLHTGEKPFKCTWPTCHYSFLTASAMKDHYRTHTGEKSFLCDLCGFAGGTRHALTKHRRQHTGEKPFKCDECNFASTTQSHLTRHKRVHTGEKPYRCPWCDYRSNCAENIRKHILHTGKHEGVKMYNCPKCDYGTNVPVEFRNHLKEQHPDIENPDLAYLHAGIVSKSYECRLKGQGATFVETDSPFTAAALAEEPLVKEKPLRSSRRPAPPPEQVQQVIIFQGYDGEFALDPSVEETAAATLQTLAMAGQVARVVHITEDGQVIATSQSGAHVGSVVPGPILPEQLADGATQVVVVGGSMEGHGMDESLSPGGAVIQQVTKQEILNLSEAGVAPPEASSALDALLCAVTELGEVEGRAGLEEQGRPGAKDVLIQLPGQEVSHVAADPEAPEIQMFPQAQESPAAVEVLTQVVHPSAAMASQERAQVAFKKMVQGVLQFAVCDTAAAGQLVKDGVTQVVVSEEGAVHMVAGEGAQIIMQEAQGEHMDLVESDGEISQIIVTEELVQAMVQESSGGFSEGTTHYILTELPPGVQDEPGLYSHTVLETADSQELLQAGATLGTEAGAPSRAEQLASVVIYTQEGSSAAAAIQSQRESSELQEA</sequence>
<reference key="1">
    <citation type="journal article" date="2005" name="Nature">
        <title>DNA sequence and analysis of human chromosome 18.</title>
        <authorList>
            <person name="Nusbaum C."/>
            <person name="Zody M.C."/>
            <person name="Borowsky M.L."/>
            <person name="Kamal M."/>
            <person name="Kodira C.D."/>
            <person name="Taylor T.D."/>
            <person name="Whittaker C.A."/>
            <person name="Chang J.L."/>
            <person name="Cuomo C.A."/>
            <person name="Dewar K."/>
            <person name="FitzGerald M.G."/>
            <person name="Yang X."/>
            <person name="Abouelleil A."/>
            <person name="Allen N.R."/>
            <person name="Anderson S."/>
            <person name="Bloom T."/>
            <person name="Bugalter B."/>
            <person name="Butler J."/>
            <person name="Cook A."/>
            <person name="DeCaprio D."/>
            <person name="Engels R."/>
            <person name="Garber M."/>
            <person name="Gnirke A."/>
            <person name="Hafez N."/>
            <person name="Hall J.L."/>
            <person name="Norman C.H."/>
            <person name="Itoh T."/>
            <person name="Jaffe D.B."/>
            <person name="Kuroki Y."/>
            <person name="Lehoczky J."/>
            <person name="Lui A."/>
            <person name="Macdonald P."/>
            <person name="Mauceli E."/>
            <person name="Mikkelsen T.S."/>
            <person name="Naylor J.W."/>
            <person name="Nicol R."/>
            <person name="Nguyen C."/>
            <person name="Noguchi H."/>
            <person name="O'Leary S.B."/>
            <person name="Piqani B."/>
            <person name="Smith C.L."/>
            <person name="Talamas J.A."/>
            <person name="Topham K."/>
            <person name="Totoki Y."/>
            <person name="Toyoda A."/>
            <person name="Wain H.M."/>
            <person name="Young S.K."/>
            <person name="Zeng Q."/>
            <person name="Zimmer A.R."/>
            <person name="Fujiyama A."/>
            <person name="Hattori M."/>
            <person name="Birren B.W."/>
            <person name="Sakaki Y."/>
            <person name="Lander E.S."/>
        </authorList>
    </citation>
    <scope>NUCLEOTIDE SEQUENCE [LARGE SCALE GENOMIC DNA]</scope>
</reference>
<reference key="2">
    <citation type="journal article" date="2004" name="Nat. Genet.">
        <title>Complete sequencing and characterization of 21,243 full-length human cDNAs.</title>
        <authorList>
            <person name="Ota T."/>
            <person name="Suzuki Y."/>
            <person name="Nishikawa T."/>
            <person name="Otsuki T."/>
            <person name="Sugiyama T."/>
            <person name="Irie R."/>
            <person name="Wakamatsu A."/>
            <person name="Hayashi K."/>
            <person name="Sato H."/>
            <person name="Nagai K."/>
            <person name="Kimura K."/>
            <person name="Makita H."/>
            <person name="Sekine M."/>
            <person name="Obayashi M."/>
            <person name="Nishi T."/>
            <person name="Shibahara T."/>
            <person name="Tanaka T."/>
            <person name="Ishii S."/>
            <person name="Yamamoto J."/>
            <person name="Saito K."/>
            <person name="Kawai Y."/>
            <person name="Isono Y."/>
            <person name="Nakamura Y."/>
            <person name="Nagahari K."/>
            <person name="Murakami K."/>
            <person name="Yasuda T."/>
            <person name="Iwayanagi T."/>
            <person name="Wagatsuma M."/>
            <person name="Shiratori A."/>
            <person name="Sudo H."/>
            <person name="Hosoiri T."/>
            <person name="Kaku Y."/>
            <person name="Kodaira H."/>
            <person name="Kondo H."/>
            <person name="Sugawara M."/>
            <person name="Takahashi M."/>
            <person name="Kanda K."/>
            <person name="Yokoi T."/>
            <person name="Furuya T."/>
            <person name="Kikkawa E."/>
            <person name="Omura Y."/>
            <person name="Abe K."/>
            <person name="Kamihara K."/>
            <person name="Katsuta N."/>
            <person name="Sato K."/>
            <person name="Tanikawa M."/>
            <person name="Yamazaki M."/>
            <person name="Ninomiya K."/>
            <person name="Ishibashi T."/>
            <person name="Yamashita H."/>
            <person name="Murakawa K."/>
            <person name="Fujimori K."/>
            <person name="Tanai H."/>
            <person name="Kimata M."/>
            <person name="Watanabe M."/>
            <person name="Hiraoka S."/>
            <person name="Chiba Y."/>
            <person name="Ishida S."/>
            <person name="Ono Y."/>
            <person name="Takiguchi S."/>
            <person name="Watanabe S."/>
            <person name="Yosida M."/>
            <person name="Hotuta T."/>
            <person name="Kusano J."/>
            <person name="Kanehori K."/>
            <person name="Takahashi-Fujii A."/>
            <person name="Hara H."/>
            <person name="Tanase T.-O."/>
            <person name="Nomura Y."/>
            <person name="Togiya S."/>
            <person name="Komai F."/>
            <person name="Hara R."/>
            <person name="Takeuchi K."/>
            <person name="Arita M."/>
            <person name="Imose N."/>
            <person name="Musashino K."/>
            <person name="Yuuki H."/>
            <person name="Oshima A."/>
            <person name="Sasaki N."/>
            <person name="Aotsuka S."/>
            <person name="Yoshikawa Y."/>
            <person name="Matsunawa H."/>
            <person name="Ichihara T."/>
            <person name="Shiohata N."/>
            <person name="Sano S."/>
            <person name="Moriya S."/>
            <person name="Momiyama H."/>
            <person name="Satoh N."/>
            <person name="Takami S."/>
            <person name="Terashima Y."/>
            <person name="Suzuki O."/>
            <person name="Nakagawa S."/>
            <person name="Senoh A."/>
            <person name="Mizoguchi H."/>
            <person name="Goto Y."/>
            <person name="Shimizu F."/>
            <person name="Wakebe H."/>
            <person name="Hishigaki H."/>
            <person name="Watanabe T."/>
            <person name="Sugiyama A."/>
            <person name="Takemoto M."/>
            <person name="Kawakami B."/>
            <person name="Yamazaki M."/>
            <person name="Watanabe K."/>
            <person name="Kumagai A."/>
            <person name="Itakura S."/>
            <person name="Fukuzumi Y."/>
            <person name="Fujimori Y."/>
            <person name="Komiyama M."/>
            <person name="Tashiro H."/>
            <person name="Tanigami A."/>
            <person name="Fujiwara T."/>
            <person name="Ono T."/>
            <person name="Yamada K."/>
            <person name="Fujii Y."/>
            <person name="Ozaki K."/>
            <person name="Hirao M."/>
            <person name="Ohmori Y."/>
            <person name="Kawabata A."/>
            <person name="Hikiji T."/>
            <person name="Kobatake N."/>
            <person name="Inagaki H."/>
            <person name="Ikema Y."/>
            <person name="Okamoto S."/>
            <person name="Okitani R."/>
            <person name="Kawakami T."/>
            <person name="Noguchi S."/>
            <person name="Itoh T."/>
            <person name="Shigeta K."/>
            <person name="Senba T."/>
            <person name="Matsumura K."/>
            <person name="Nakajima Y."/>
            <person name="Mizuno T."/>
            <person name="Morinaga M."/>
            <person name="Sasaki M."/>
            <person name="Togashi T."/>
            <person name="Oyama M."/>
            <person name="Hata H."/>
            <person name="Watanabe M."/>
            <person name="Komatsu T."/>
            <person name="Mizushima-Sugano J."/>
            <person name="Satoh T."/>
            <person name="Shirai Y."/>
            <person name="Takahashi Y."/>
            <person name="Nakagawa K."/>
            <person name="Okumura K."/>
            <person name="Nagase T."/>
            <person name="Nomura N."/>
            <person name="Kikuchi H."/>
            <person name="Masuho Y."/>
            <person name="Yamashita R."/>
            <person name="Nakai K."/>
            <person name="Yada T."/>
            <person name="Nakamura Y."/>
            <person name="Ohara O."/>
            <person name="Isogai T."/>
            <person name="Sugano S."/>
        </authorList>
    </citation>
    <scope>NUCLEOTIDE SEQUENCE [LARGE SCALE MRNA] OF 1-784 AND 1998-2248 (ISOFORM 1)</scope>
    <scope>NUCLEOTIDE SEQUENCE [LARGE SCALE MRNA] OF 774-2248 (ISOFORM 2)</scope>
    <scope>NUCLEOTIDE SEQUENCE [LARGE SCALE MRNA] OF 1124-2248 (ISOFORM 3)</scope>
    <source>
        <tissue>Hepatoma</tissue>
        <tissue>Teratocarcinoma</tissue>
        <tissue>Thyroid</tissue>
    </source>
</reference>
<reference key="3">
    <citation type="journal article" date="2000" name="DNA Res.">
        <title>Prediction of the coding sequences of unidentified human genes. XIX. The complete sequences of 100 new cDNA clones from brain which code for large proteins in vitro.</title>
        <authorList>
            <person name="Nagase T."/>
            <person name="Kikuno R."/>
            <person name="Hattori A."/>
            <person name="Kondo Y."/>
            <person name="Okumura K."/>
            <person name="Ohara O."/>
        </authorList>
    </citation>
    <scope>NUCLEOTIDE SEQUENCE [LARGE SCALE MRNA] OF 1084-2248 (ISOFORM 1)</scope>
    <source>
        <tissue>Brain</tissue>
    </source>
</reference>
<reference key="4">
    <citation type="journal article" date="2009" name="Sci. Signal.">
        <title>Quantitative phosphoproteomic analysis of T cell receptor signaling reveals system-wide modulation of protein-protein interactions.</title>
        <authorList>
            <person name="Mayya V."/>
            <person name="Lundgren D.H."/>
            <person name="Hwang S.-I."/>
            <person name="Rezaul K."/>
            <person name="Wu L."/>
            <person name="Eng J.K."/>
            <person name="Rodionov V."/>
            <person name="Han D.K."/>
        </authorList>
    </citation>
    <scope>IDENTIFICATION BY MASS SPECTROMETRY [LARGE SCALE ANALYSIS]</scope>
    <source>
        <tissue>Leukemic T-cell</tissue>
    </source>
</reference>
<reference key="5">
    <citation type="journal article" date="2013" name="J. Proteome Res.">
        <title>Toward a comprehensive characterization of a human cancer cell phosphoproteome.</title>
        <authorList>
            <person name="Zhou H."/>
            <person name="Di Palma S."/>
            <person name="Preisinger C."/>
            <person name="Peng M."/>
            <person name="Polat A.N."/>
            <person name="Heck A.J."/>
            <person name="Mohammed S."/>
        </authorList>
    </citation>
    <scope>PHOSPHORYLATION [LARGE SCALE ANALYSIS] AT SER-1262</scope>
    <scope>IDENTIFICATION BY MASS SPECTROMETRY [LARGE SCALE ANALYSIS]</scope>
    <source>
        <tissue>Cervix carcinoma</tissue>
        <tissue>Erythroleukemia</tissue>
    </source>
</reference>
<reference key="6">
    <citation type="journal article" date="2014" name="J. Proteomics">
        <title>An enzyme assisted RP-RPLC approach for in-depth analysis of human liver phosphoproteome.</title>
        <authorList>
            <person name="Bian Y."/>
            <person name="Song C."/>
            <person name="Cheng K."/>
            <person name="Dong M."/>
            <person name="Wang F."/>
            <person name="Huang J."/>
            <person name="Sun D."/>
            <person name="Wang L."/>
            <person name="Ye M."/>
            <person name="Zou H."/>
        </authorList>
    </citation>
    <scope>PHOSPHORYLATION [LARGE SCALE ANALYSIS] AT SER-1262</scope>
    <scope>IDENTIFICATION BY MASS SPECTROMETRY [LARGE SCALE ANALYSIS]</scope>
    <source>
        <tissue>Liver</tissue>
    </source>
</reference>
<reference key="7">
    <citation type="journal article" date="2014" name="Orphanet J. Rare Dis.">
        <title>Mutations in zinc finger 407 [ZNF407] cause a unique autosomal recessive cognitive impairment syndrome.</title>
        <authorList>
            <person name="Kambouris M."/>
            <person name="Maroun R.C."/>
            <person name="Ben-Omran T."/>
            <person name="Al-Sarraj Y."/>
            <person name="Errafii K."/>
            <person name="Ali R."/>
            <person name="Boulos H."/>
            <person name="Curmi P.A."/>
            <person name="El-Shanti H."/>
        </authorList>
    </citation>
    <scope>INVOLVEMENT IN SIMHA</scope>
    <scope>VARIANT SIMHA TRP-1685</scope>
</reference>
<reference key="8">
    <citation type="journal article" date="2020" name="J. Hum. Genet.">
        <title>Biallelic ZNF407 mutations in a neurodevelopmental disorder with ID, short stature and variable microcephaly, hypotonia, ocular anomalies and facial dysmorphism.</title>
        <authorList>
            <person name="Zahra Q."/>
            <person name="Cakmak C."/>
            <person name="Koprulu M."/>
            <person name="Shuaib M."/>
            <person name="Sobreira N."/>
            <person name="Kalsner L."/>
            <person name="Sobreira J."/>
            <person name="Guillen Sacoto M.J."/>
            <person name="Malik S."/>
            <person name="Tolun A."/>
        </authorList>
    </citation>
    <scope>VARIANTS SIMHA VAL-802; VAL-939 INS; GLY-962 AND ASN-1214</scope>
</reference>
<name>ZN407_HUMAN</name>
<comment type="function">
    <text>May be involved in transcriptional regulation.</text>
</comment>
<comment type="subcellular location">
    <subcellularLocation>
        <location evidence="6">Nucleus</location>
    </subcellularLocation>
</comment>
<comment type="alternative products">
    <event type="alternative splicing"/>
    <isoform>
        <id>Q9C0G0-1</id>
        <name>1</name>
        <sequence type="displayed"/>
    </isoform>
    <isoform>
        <id>Q9C0G0-2</id>
        <name>2</name>
        <sequence type="described" ref="VSP_028845 VSP_028846"/>
    </isoform>
    <isoform>
        <id>Q9C0G0-3</id>
        <name>3</name>
        <sequence type="described" ref="VSP_028843 VSP_028844"/>
    </isoform>
</comment>
<comment type="disease" evidence="3 4">
    <disease id="DI-06249">
        <name>Short stature, impaired intellectual development, microcephaly, hypotonia, and ocular anomalies</name>
        <acronym>SIMHA</acronym>
        <description>An autosomal recessive syndrome characterized by short stature, impaired intellectual development, microcephaly, hypotonia, and ocular anomalies.</description>
        <dbReference type="MIM" id="619557"/>
    </disease>
    <text>The disease is caused by variants affecting the gene represented in this entry.</text>
</comment>
<comment type="sequence caution" evidence="6">
    <conflict type="erroneous initiation">
        <sequence resource="EMBL-CDS" id="BAA91077"/>
    </conflict>
    <text>Truncated N-terminus.</text>
</comment>
<comment type="sequence caution" evidence="6">
    <conflict type="erroneous initiation">
        <sequence resource="EMBL-CDS" id="BAA91080"/>
    </conflict>
    <text>Truncated N-terminus.</text>
</comment>
<accession>Q9C0G0</accession>
<accession>B5MD54</accession>
<accession>Q96MY0</accession>
<accession>Q9H8A1</accession>
<accession>Q9NXD4</accession>
<accession>Q9NXD7</accession>
<protein>
    <recommendedName>
        <fullName>Zinc finger protein 407</fullName>
    </recommendedName>
</protein>
<gene>
    <name type="primary">ZNF407</name>
    <name type="synonym">KIAA1703</name>
</gene>
<proteinExistence type="evidence at protein level"/>
<evidence type="ECO:0000255" key="1">
    <source>
        <dbReference type="PROSITE-ProRule" id="PRU00042"/>
    </source>
</evidence>
<evidence type="ECO:0000256" key="2">
    <source>
        <dbReference type="SAM" id="MobiDB-lite"/>
    </source>
</evidence>
<evidence type="ECO:0000269" key="3">
    <source>
    </source>
</evidence>
<evidence type="ECO:0000269" key="4">
    <source>
    </source>
</evidence>
<evidence type="ECO:0000303" key="5">
    <source>
    </source>
</evidence>
<evidence type="ECO:0000305" key="6"/>
<evidence type="ECO:0007744" key="7">
    <source>
    </source>
</evidence>
<evidence type="ECO:0007744" key="8">
    <source>
    </source>
</evidence>
<dbReference type="EMBL" id="AC138660">
    <property type="status" value="NOT_ANNOTATED_CDS"/>
    <property type="molecule type" value="Genomic_DNA"/>
</dbReference>
<dbReference type="EMBL" id="AC091589">
    <property type="status" value="NOT_ANNOTATED_CDS"/>
    <property type="molecule type" value="Genomic_DNA"/>
</dbReference>
<dbReference type="EMBL" id="AC023380">
    <property type="status" value="NOT_ANNOTATED_CDS"/>
    <property type="molecule type" value="Genomic_DNA"/>
</dbReference>
<dbReference type="EMBL" id="AC100783">
    <property type="status" value="NOT_ANNOTATED_CDS"/>
    <property type="molecule type" value="Genomic_DNA"/>
</dbReference>
<dbReference type="EMBL" id="AC015819">
    <property type="status" value="NOT_ANNOTATED_CDS"/>
    <property type="molecule type" value="Genomic_DNA"/>
</dbReference>
<dbReference type="EMBL" id="AK000314">
    <property type="protein sequence ID" value="BAA91077.1"/>
    <property type="status" value="ALT_INIT"/>
    <property type="molecule type" value="mRNA"/>
</dbReference>
<dbReference type="EMBL" id="AK000317">
    <property type="protein sequence ID" value="BAA91080.1"/>
    <property type="status" value="ALT_INIT"/>
    <property type="molecule type" value="mRNA"/>
</dbReference>
<dbReference type="EMBL" id="AK023901">
    <property type="status" value="NOT_ANNOTATED_CDS"/>
    <property type="molecule type" value="mRNA"/>
</dbReference>
<dbReference type="EMBL" id="AK056288">
    <property type="protein sequence ID" value="BAB71139.1"/>
    <property type="molecule type" value="mRNA"/>
</dbReference>
<dbReference type="EMBL" id="AB051490">
    <property type="protein sequence ID" value="BAB21794.1"/>
    <property type="molecule type" value="mRNA"/>
</dbReference>
<dbReference type="CCDS" id="CCDS45885.1">
    <molecule id="Q9C0G0-1"/>
</dbReference>
<dbReference type="CCDS" id="CCDS54191.1">
    <molecule id="Q9C0G0-3"/>
</dbReference>
<dbReference type="CCDS" id="CCDS58634.1">
    <molecule id="Q9C0G0-2"/>
</dbReference>
<dbReference type="RefSeq" id="NP_001139661.1">
    <molecule id="Q9C0G0-2"/>
    <property type="nucleotide sequence ID" value="NM_001146189.1"/>
</dbReference>
<dbReference type="RefSeq" id="NP_001139662.1">
    <molecule id="Q9C0G0-3"/>
    <property type="nucleotide sequence ID" value="NM_001146190.1"/>
</dbReference>
<dbReference type="RefSeq" id="NP_001371404.1">
    <molecule id="Q9C0G0-1"/>
    <property type="nucleotide sequence ID" value="NM_001384475.1"/>
</dbReference>
<dbReference type="RefSeq" id="NP_060227.2">
    <molecule id="Q9C0G0-1"/>
    <property type="nucleotide sequence ID" value="NM_017757.3"/>
</dbReference>
<dbReference type="RefSeq" id="XP_005266783.1">
    <property type="nucleotide sequence ID" value="XM_005266726.4"/>
</dbReference>
<dbReference type="RefSeq" id="XP_011524370.1">
    <property type="nucleotide sequence ID" value="XM_011526068.2"/>
</dbReference>
<dbReference type="RefSeq" id="XP_011524372.1">
    <molecule id="Q9C0G0-3"/>
    <property type="nucleotide sequence ID" value="XM_011526070.3"/>
</dbReference>
<dbReference type="BioGRID" id="120767">
    <property type="interactions" value="13"/>
</dbReference>
<dbReference type="FunCoup" id="Q9C0G0">
    <property type="interactions" value="3002"/>
</dbReference>
<dbReference type="IntAct" id="Q9C0G0">
    <property type="interactions" value="9"/>
</dbReference>
<dbReference type="STRING" id="9606.ENSP00000299687"/>
<dbReference type="GlyGen" id="Q9C0G0">
    <property type="glycosylation" value="2 sites, 1 O-linked glycan (1 site)"/>
</dbReference>
<dbReference type="iPTMnet" id="Q9C0G0"/>
<dbReference type="PhosphoSitePlus" id="Q9C0G0"/>
<dbReference type="BioMuta" id="ZNF407"/>
<dbReference type="DMDM" id="160358927"/>
<dbReference type="jPOST" id="Q9C0G0"/>
<dbReference type="MassIVE" id="Q9C0G0"/>
<dbReference type="PaxDb" id="9606-ENSP00000299687"/>
<dbReference type="PeptideAtlas" id="Q9C0G0"/>
<dbReference type="ProteomicsDB" id="80031">
    <molecule id="Q9C0G0-1"/>
</dbReference>
<dbReference type="ProteomicsDB" id="80032">
    <molecule id="Q9C0G0-2"/>
</dbReference>
<dbReference type="ProteomicsDB" id="80033">
    <molecule id="Q9C0G0-3"/>
</dbReference>
<dbReference type="Antibodypedia" id="23353">
    <property type="antibodies" value="51 antibodies from 13 providers"/>
</dbReference>
<dbReference type="DNASU" id="55628"/>
<dbReference type="Ensembl" id="ENST00000299687.10">
    <molecule id="Q9C0G0-1"/>
    <property type="protein sequence ID" value="ENSP00000299687.4"/>
    <property type="gene ID" value="ENSG00000215421.10"/>
</dbReference>
<dbReference type="Ensembl" id="ENST00000309902.10">
    <molecule id="Q9C0G0-3"/>
    <property type="protein sequence ID" value="ENSP00000310359.5"/>
    <property type="gene ID" value="ENSG00000215421.10"/>
</dbReference>
<dbReference type="Ensembl" id="ENST00000577538.5">
    <molecule id="Q9C0G0-2"/>
    <property type="protein sequence ID" value="ENSP00000463270.1"/>
    <property type="gene ID" value="ENSG00000215421.10"/>
</dbReference>
<dbReference type="Ensembl" id="ENST00000582337.5">
    <molecule id="Q9C0G0-3"/>
    <property type="protein sequence ID" value="ENSP00000462348.1"/>
    <property type="gene ID" value="ENSG00000215421.10"/>
</dbReference>
<dbReference type="GeneID" id="55628"/>
<dbReference type="KEGG" id="hsa:55628"/>
<dbReference type="MANE-Select" id="ENST00000299687.10">
    <property type="protein sequence ID" value="ENSP00000299687.4"/>
    <property type="RefSeq nucleotide sequence ID" value="NM_017757.3"/>
    <property type="RefSeq protein sequence ID" value="NP_060227.2"/>
</dbReference>
<dbReference type="UCSC" id="uc002llw.3">
    <molecule id="Q9C0G0-1"/>
    <property type="organism name" value="human"/>
</dbReference>
<dbReference type="AGR" id="HGNC:19904"/>
<dbReference type="CTD" id="55628"/>
<dbReference type="DisGeNET" id="55628"/>
<dbReference type="GeneCards" id="ZNF407"/>
<dbReference type="HGNC" id="HGNC:19904">
    <property type="gene designation" value="ZNF407"/>
</dbReference>
<dbReference type="HPA" id="ENSG00000215421">
    <property type="expression patterns" value="Low tissue specificity"/>
</dbReference>
<dbReference type="MalaCards" id="ZNF407"/>
<dbReference type="MIM" id="615894">
    <property type="type" value="gene"/>
</dbReference>
<dbReference type="MIM" id="619557">
    <property type="type" value="phenotype"/>
</dbReference>
<dbReference type="neXtProt" id="NX_Q9C0G0"/>
<dbReference type="OpenTargets" id="ENSG00000215421"/>
<dbReference type="PharmGKB" id="PA134942906"/>
<dbReference type="VEuPathDB" id="HostDB:ENSG00000215421"/>
<dbReference type="eggNOG" id="KOG1721">
    <property type="taxonomic scope" value="Eukaryota"/>
</dbReference>
<dbReference type="GeneTree" id="ENSGT00940000156446"/>
<dbReference type="HOGENOM" id="CLU_002134_0_0_1"/>
<dbReference type="InParanoid" id="Q9C0G0"/>
<dbReference type="OMA" id="CSFIAHS"/>
<dbReference type="OrthoDB" id="7788172at2759"/>
<dbReference type="PAN-GO" id="Q9C0G0">
    <property type="GO annotations" value="2 GO annotations based on evolutionary models"/>
</dbReference>
<dbReference type="PhylomeDB" id="Q9C0G0"/>
<dbReference type="TreeFam" id="TF350895"/>
<dbReference type="PathwayCommons" id="Q9C0G0"/>
<dbReference type="SignaLink" id="Q9C0G0"/>
<dbReference type="BioGRID-ORCS" id="55628">
    <property type="hits" value="663 hits in 1179 CRISPR screens"/>
</dbReference>
<dbReference type="CD-CODE" id="232F8A39">
    <property type="entry name" value="P-body"/>
</dbReference>
<dbReference type="ChiTaRS" id="ZNF407">
    <property type="organism name" value="human"/>
</dbReference>
<dbReference type="GenomeRNAi" id="55628"/>
<dbReference type="Pharos" id="Q9C0G0">
    <property type="development level" value="Tbio"/>
</dbReference>
<dbReference type="PRO" id="PR:Q9C0G0"/>
<dbReference type="Proteomes" id="UP000005640">
    <property type="component" value="Chromosome 18"/>
</dbReference>
<dbReference type="RNAct" id="Q9C0G0">
    <property type="molecule type" value="protein"/>
</dbReference>
<dbReference type="Bgee" id="ENSG00000215421">
    <property type="expression patterns" value="Expressed in secondary oocyte and 185 other cell types or tissues"/>
</dbReference>
<dbReference type="ExpressionAtlas" id="Q9C0G0">
    <property type="expression patterns" value="baseline and differential"/>
</dbReference>
<dbReference type="GO" id="GO:0005634">
    <property type="term" value="C:nucleus"/>
    <property type="evidence" value="ECO:0000318"/>
    <property type="project" value="GO_Central"/>
</dbReference>
<dbReference type="GO" id="GO:0003677">
    <property type="term" value="F:DNA binding"/>
    <property type="evidence" value="ECO:0007669"/>
    <property type="project" value="UniProtKB-KW"/>
</dbReference>
<dbReference type="GO" id="GO:0008270">
    <property type="term" value="F:zinc ion binding"/>
    <property type="evidence" value="ECO:0007669"/>
    <property type="project" value="UniProtKB-KW"/>
</dbReference>
<dbReference type="GO" id="GO:0045944">
    <property type="term" value="P:positive regulation of transcription by RNA polymerase II"/>
    <property type="evidence" value="ECO:0000318"/>
    <property type="project" value="GO_Central"/>
</dbReference>
<dbReference type="FunFam" id="3.30.160.60:FF:000322">
    <property type="entry name" value="GDNF-inducible zinc finger protein 1"/>
    <property type="match status" value="1"/>
</dbReference>
<dbReference type="FunFam" id="3.30.160.60:FF:000721">
    <property type="entry name" value="Zinc finger protein 407"/>
    <property type="match status" value="1"/>
</dbReference>
<dbReference type="FunFam" id="3.30.160.60:FF:000969">
    <property type="entry name" value="Zinc finger protein 407"/>
    <property type="match status" value="1"/>
</dbReference>
<dbReference type="FunFam" id="3.30.160.60:FF:001030">
    <property type="entry name" value="Zinc finger protein 407"/>
    <property type="match status" value="1"/>
</dbReference>
<dbReference type="FunFam" id="3.30.160.60:FF:001109">
    <property type="entry name" value="Zinc finger protein 407"/>
    <property type="match status" value="1"/>
</dbReference>
<dbReference type="FunFam" id="3.30.160.60:FF:001514">
    <property type="entry name" value="Zinc finger protein 407"/>
    <property type="match status" value="1"/>
</dbReference>
<dbReference type="FunFam" id="3.30.160.60:FF:002673">
    <property type="entry name" value="Zinc finger protein 407"/>
    <property type="match status" value="1"/>
</dbReference>
<dbReference type="FunFam" id="3.30.160.60:FF:001689">
    <property type="entry name" value="zinc finger protein 407"/>
    <property type="match status" value="1"/>
</dbReference>
<dbReference type="FunFam" id="3.30.160.60:FF:001819">
    <property type="entry name" value="zinc finger protein 407"/>
    <property type="match status" value="1"/>
</dbReference>
<dbReference type="FunFam" id="3.30.160.60:FF:001863">
    <property type="entry name" value="zinc finger protein 407"/>
    <property type="match status" value="1"/>
</dbReference>
<dbReference type="FunFam" id="3.30.160.60:FF:001710">
    <property type="entry name" value="Zinc finger protein 407 isoform 1"/>
    <property type="match status" value="1"/>
</dbReference>
<dbReference type="FunFam" id="3.30.160.60:FF:001138">
    <property type="entry name" value="zinc finger protein 407 isoform X1"/>
    <property type="match status" value="1"/>
</dbReference>
<dbReference type="Gene3D" id="3.30.160.60">
    <property type="entry name" value="Classic Zinc Finger"/>
    <property type="match status" value="13"/>
</dbReference>
<dbReference type="InterPro" id="IPR003604">
    <property type="entry name" value="Matrin/U1-like-C_Znf_C2H2"/>
</dbReference>
<dbReference type="InterPro" id="IPR050688">
    <property type="entry name" value="Zinc_finger/UBP_domain"/>
</dbReference>
<dbReference type="InterPro" id="IPR036236">
    <property type="entry name" value="Znf_C2H2_sf"/>
</dbReference>
<dbReference type="InterPro" id="IPR013087">
    <property type="entry name" value="Znf_C2H2_type"/>
</dbReference>
<dbReference type="PANTHER" id="PTHR24403">
    <property type="entry name" value="ZINC FINGER PROTEIN"/>
    <property type="match status" value="1"/>
</dbReference>
<dbReference type="PANTHER" id="PTHR24403:SF60">
    <property type="entry name" value="ZINC FINGER PROTEIN 407"/>
    <property type="match status" value="1"/>
</dbReference>
<dbReference type="Pfam" id="PF00096">
    <property type="entry name" value="zf-C2H2"/>
    <property type="match status" value="4"/>
</dbReference>
<dbReference type="SMART" id="SM00355">
    <property type="entry name" value="ZnF_C2H2"/>
    <property type="match status" value="25"/>
</dbReference>
<dbReference type="SMART" id="SM00451">
    <property type="entry name" value="ZnF_U1"/>
    <property type="match status" value="7"/>
</dbReference>
<dbReference type="SUPFAM" id="SSF57667">
    <property type="entry name" value="beta-beta-alpha zinc fingers"/>
    <property type="match status" value="5"/>
</dbReference>
<dbReference type="PROSITE" id="PS00028">
    <property type="entry name" value="ZINC_FINGER_C2H2_1"/>
    <property type="match status" value="8"/>
</dbReference>
<dbReference type="PROSITE" id="PS50157">
    <property type="entry name" value="ZINC_FINGER_C2H2_2"/>
    <property type="match status" value="9"/>
</dbReference>